<dbReference type="EC" id="2.8.4.3" evidence="1"/>
<dbReference type="EMBL" id="AP007255">
    <property type="protein sequence ID" value="BAE53267.1"/>
    <property type="molecule type" value="Genomic_DNA"/>
</dbReference>
<dbReference type="RefSeq" id="WP_011386807.1">
    <property type="nucleotide sequence ID" value="NC_007626.1"/>
</dbReference>
<dbReference type="SMR" id="Q2VYQ8"/>
<dbReference type="STRING" id="342108.amb4463"/>
<dbReference type="KEGG" id="mag:amb4463"/>
<dbReference type="HOGENOM" id="CLU_018697_2_0_5"/>
<dbReference type="OrthoDB" id="9805215at2"/>
<dbReference type="Proteomes" id="UP000007058">
    <property type="component" value="Chromosome"/>
</dbReference>
<dbReference type="GO" id="GO:0005829">
    <property type="term" value="C:cytosol"/>
    <property type="evidence" value="ECO:0007669"/>
    <property type="project" value="TreeGrafter"/>
</dbReference>
<dbReference type="GO" id="GO:0051539">
    <property type="term" value="F:4 iron, 4 sulfur cluster binding"/>
    <property type="evidence" value="ECO:0007669"/>
    <property type="project" value="UniProtKB-UniRule"/>
</dbReference>
<dbReference type="GO" id="GO:0046872">
    <property type="term" value="F:metal ion binding"/>
    <property type="evidence" value="ECO:0007669"/>
    <property type="project" value="UniProtKB-KW"/>
</dbReference>
<dbReference type="GO" id="GO:0035597">
    <property type="term" value="F:N6-isopentenyladenosine methylthiotransferase activity"/>
    <property type="evidence" value="ECO:0007669"/>
    <property type="project" value="TreeGrafter"/>
</dbReference>
<dbReference type="CDD" id="cd01335">
    <property type="entry name" value="Radical_SAM"/>
    <property type="match status" value="1"/>
</dbReference>
<dbReference type="FunFam" id="3.40.50.12160:FF:000001">
    <property type="entry name" value="tRNA-2-methylthio-N(6)-dimethylallyladenosine synthase"/>
    <property type="match status" value="1"/>
</dbReference>
<dbReference type="FunFam" id="3.80.30.20:FF:000001">
    <property type="entry name" value="tRNA-2-methylthio-N(6)-dimethylallyladenosine synthase 2"/>
    <property type="match status" value="1"/>
</dbReference>
<dbReference type="Gene3D" id="3.40.50.12160">
    <property type="entry name" value="Methylthiotransferase, N-terminal domain"/>
    <property type="match status" value="1"/>
</dbReference>
<dbReference type="Gene3D" id="3.80.30.20">
    <property type="entry name" value="tm_1862 like domain"/>
    <property type="match status" value="1"/>
</dbReference>
<dbReference type="HAMAP" id="MF_01864">
    <property type="entry name" value="tRNA_metthiotr_MiaB"/>
    <property type="match status" value="1"/>
</dbReference>
<dbReference type="InterPro" id="IPR006638">
    <property type="entry name" value="Elp3/MiaA/NifB-like_rSAM"/>
</dbReference>
<dbReference type="InterPro" id="IPR005839">
    <property type="entry name" value="Methylthiotransferase"/>
</dbReference>
<dbReference type="InterPro" id="IPR020612">
    <property type="entry name" value="Methylthiotransferase_CS"/>
</dbReference>
<dbReference type="InterPro" id="IPR013848">
    <property type="entry name" value="Methylthiotransferase_N"/>
</dbReference>
<dbReference type="InterPro" id="IPR038135">
    <property type="entry name" value="Methylthiotransferase_N_sf"/>
</dbReference>
<dbReference type="InterPro" id="IPR006463">
    <property type="entry name" value="MiaB_methiolase"/>
</dbReference>
<dbReference type="InterPro" id="IPR007197">
    <property type="entry name" value="rSAM"/>
</dbReference>
<dbReference type="InterPro" id="IPR023404">
    <property type="entry name" value="rSAM_horseshoe"/>
</dbReference>
<dbReference type="InterPro" id="IPR002792">
    <property type="entry name" value="TRAM_dom"/>
</dbReference>
<dbReference type="NCBIfam" id="TIGR01574">
    <property type="entry name" value="miaB-methiolase"/>
    <property type="match status" value="1"/>
</dbReference>
<dbReference type="NCBIfam" id="TIGR00089">
    <property type="entry name" value="MiaB/RimO family radical SAM methylthiotransferase"/>
    <property type="match status" value="1"/>
</dbReference>
<dbReference type="PANTHER" id="PTHR43020">
    <property type="entry name" value="CDK5 REGULATORY SUBUNIT-ASSOCIATED PROTEIN 1"/>
    <property type="match status" value="1"/>
</dbReference>
<dbReference type="PANTHER" id="PTHR43020:SF2">
    <property type="entry name" value="MITOCHONDRIAL TRNA METHYLTHIOTRANSFERASE CDK5RAP1"/>
    <property type="match status" value="1"/>
</dbReference>
<dbReference type="Pfam" id="PF04055">
    <property type="entry name" value="Radical_SAM"/>
    <property type="match status" value="1"/>
</dbReference>
<dbReference type="Pfam" id="PF01938">
    <property type="entry name" value="TRAM"/>
    <property type="match status" value="1"/>
</dbReference>
<dbReference type="Pfam" id="PF00919">
    <property type="entry name" value="UPF0004"/>
    <property type="match status" value="1"/>
</dbReference>
<dbReference type="SFLD" id="SFLDF00273">
    <property type="entry name" value="(dimethylallyl)adenosine_tRNA"/>
    <property type="match status" value="1"/>
</dbReference>
<dbReference type="SFLD" id="SFLDG01082">
    <property type="entry name" value="B12-binding_domain_containing"/>
    <property type="match status" value="1"/>
</dbReference>
<dbReference type="SFLD" id="SFLDG01061">
    <property type="entry name" value="methylthiotransferase"/>
    <property type="match status" value="1"/>
</dbReference>
<dbReference type="SMART" id="SM00729">
    <property type="entry name" value="Elp3"/>
    <property type="match status" value="1"/>
</dbReference>
<dbReference type="SUPFAM" id="SSF102114">
    <property type="entry name" value="Radical SAM enzymes"/>
    <property type="match status" value="1"/>
</dbReference>
<dbReference type="PROSITE" id="PS51449">
    <property type="entry name" value="MTTASE_N"/>
    <property type="match status" value="1"/>
</dbReference>
<dbReference type="PROSITE" id="PS01278">
    <property type="entry name" value="MTTASE_RADICAL"/>
    <property type="match status" value="1"/>
</dbReference>
<dbReference type="PROSITE" id="PS51918">
    <property type="entry name" value="RADICAL_SAM"/>
    <property type="match status" value="1"/>
</dbReference>
<dbReference type="PROSITE" id="PS50926">
    <property type="entry name" value="TRAM"/>
    <property type="match status" value="1"/>
</dbReference>
<feature type="chain" id="PRO_0000374367" description="tRNA-2-methylthio-N(6)-dimethylallyladenosine synthase">
    <location>
        <begin position="1"/>
        <end position="438"/>
    </location>
</feature>
<feature type="domain" description="MTTase N-terminal" evidence="1">
    <location>
        <begin position="3"/>
        <end position="123"/>
    </location>
</feature>
<feature type="domain" description="Radical SAM core" evidence="2">
    <location>
        <begin position="146"/>
        <end position="374"/>
    </location>
</feature>
<feature type="domain" description="TRAM" evidence="1">
    <location>
        <begin position="377"/>
        <end position="438"/>
    </location>
</feature>
<feature type="binding site" evidence="1">
    <location>
        <position position="12"/>
    </location>
    <ligand>
        <name>[4Fe-4S] cluster</name>
        <dbReference type="ChEBI" id="CHEBI:49883"/>
        <label>1</label>
    </ligand>
</feature>
<feature type="binding site" evidence="1">
    <location>
        <position position="48"/>
    </location>
    <ligand>
        <name>[4Fe-4S] cluster</name>
        <dbReference type="ChEBI" id="CHEBI:49883"/>
        <label>1</label>
    </ligand>
</feature>
<feature type="binding site" evidence="1">
    <location>
        <position position="86"/>
    </location>
    <ligand>
        <name>[4Fe-4S] cluster</name>
        <dbReference type="ChEBI" id="CHEBI:49883"/>
        <label>1</label>
    </ligand>
</feature>
<feature type="binding site" evidence="1">
    <location>
        <position position="160"/>
    </location>
    <ligand>
        <name>[4Fe-4S] cluster</name>
        <dbReference type="ChEBI" id="CHEBI:49883"/>
        <label>2</label>
        <note>4Fe-4S-S-AdoMet</note>
    </ligand>
</feature>
<feature type="binding site" evidence="1">
    <location>
        <position position="164"/>
    </location>
    <ligand>
        <name>[4Fe-4S] cluster</name>
        <dbReference type="ChEBI" id="CHEBI:49883"/>
        <label>2</label>
        <note>4Fe-4S-S-AdoMet</note>
    </ligand>
</feature>
<feature type="binding site" evidence="1">
    <location>
        <position position="167"/>
    </location>
    <ligand>
        <name>[4Fe-4S] cluster</name>
        <dbReference type="ChEBI" id="CHEBI:49883"/>
        <label>2</label>
        <note>4Fe-4S-S-AdoMet</note>
    </ligand>
</feature>
<organism>
    <name type="scientific">Paramagnetospirillum magneticum (strain ATCC 700264 / AMB-1)</name>
    <name type="common">Magnetospirillum magneticum</name>
    <dbReference type="NCBI Taxonomy" id="342108"/>
    <lineage>
        <taxon>Bacteria</taxon>
        <taxon>Pseudomonadati</taxon>
        <taxon>Pseudomonadota</taxon>
        <taxon>Alphaproteobacteria</taxon>
        <taxon>Rhodospirillales</taxon>
        <taxon>Magnetospirillaceae</taxon>
        <taxon>Paramagnetospirillum</taxon>
    </lineage>
</organism>
<sequence length="438" mass="47814">MAKRLFVKTYGCQMNVYDSARMADVLAPLGYGPADHAEEADMVILNTCHIREKAAEKVFSELGRLRKLQAAKAEAGGRMILAVAGCVAQAEGEEILRRAPFVDIVLGPQTYHRLPEMVAQAARAGGAVLDTEFPAEPKFDFLPEPHAEGTSAFLSVQEGCDKFCTFCVVPYTRGAEYSRPAAAVLAEAATLAAGGVREITLLGQNVNGWHGGEGWGLGRLIRALAEVEGVERIRYTTSHPRDMDDELIRAHAELPQLMPFLHLPVQSGSDRILAAMNRGHDRDTYLRLVDKLKSACPDLALSSDFIVGFPGESDADFEASMDLIRRVGFVQTYSFKYSPRPGTPAAAMETQVPEAVKDERLAQVQALLLDQTMRFNHACVGREMRILLDRPGRHAGQLLGRSPYMQPVHVKAAAHLIGTVVPLRITKVHPNSLEAVPA</sequence>
<reference key="1">
    <citation type="journal article" date="2005" name="DNA Res.">
        <title>Complete genome sequence of the facultative anaerobic magnetotactic bacterium Magnetospirillum sp. strain AMB-1.</title>
        <authorList>
            <person name="Matsunaga T."/>
            <person name="Okamura Y."/>
            <person name="Fukuda Y."/>
            <person name="Wahyudi A.T."/>
            <person name="Murase Y."/>
            <person name="Takeyama H."/>
        </authorList>
    </citation>
    <scope>NUCLEOTIDE SEQUENCE [LARGE SCALE GENOMIC DNA]</scope>
    <source>
        <strain>ATCC 700264 / AMB-1</strain>
    </source>
</reference>
<name>MIAB_PARM1</name>
<protein>
    <recommendedName>
        <fullName evidence="1">tRNA-2-methylthio-N(6)-dimethylallyladenosine synthase</fullName>
        <ecNumber evidence="1">2.8.4.3</ecNumber>
    </recommendedName>
    <alternativeName>
        <fullName evidence="1">(Dimethylallyl)adenosine tRNA methylthiotransferase MiaB</fullName>
    </alternativeName>
    <alternativeName>
        <fullName evidence="1">tRNA-i(6)A37 methylthiotransferase</fullName>
    </alternativeName>
</protein>
<keyword id="KW-0004">4Fe-4S</keyword>
<keyword id="KW-0963">Cytoplasm</keyword>
<keyword id="KW-0408">Iron</keyword>
<keyword id="KW-0411">Iron-sulfur</keyword>
<keyword id="KW-0479">Metal-binding</keyword>
<keyword id="KW-0949">S-adenosyl-L-methionine</keyword>
<keyword id="KW-0808">Transferase</keyword>
<keyword id="KW-0819">tRNA processing</keyword>
<evidence type="ECO:0000255" key="1">
    <source>
        <dbReference type="HAMAP-Rule" id="MF_01864"/>
    </source>
</evidence>
<evidence type="ECO:0000255" key="2">
    <source>
        <dbReference type="PROSITE-ProRule" id="PRU01266"/>
    </source>
</evidence>
<gene>
    <name evidence="1" type="primary">miaB</name>
    <name type="ordered locus">amb4463</name>
</gene>
<accession>Q2VYQ8</accession>
<comment type="function">
    <text evidence="1">Catalyzes the methylthiolation of N6-(dimethylallyl)adenosine (i(6)A), leading to the formation of 2-methylthio-N6-(dimethylallyl)adenosine (ms(2)i(6)A) at position 37 in tRNAs that read codons beginning with uridine.</text>
</comment>
<comment type="catalytic activity">
    <reaction evidence="1">
        <text>N(6)-dimethylallyladenosine(37) in tRNA + (sulfur carrier)-SH + AH2 + 2 S-adenosyl-L-methionine = 2-methylsulfanyl-N(6)-dimethylallyladenosine(37) in tRNA + (sulfur carrier)-H + 5'-deoxyadenosine + L-methionine + A + S-adenosyl-L-homocysteine + 2 H(+)</text>
        <dbReference type="Rhea" id="RHEA:37067"/>
        <dbReference type="Rhea" id="RHEA-COMP:10375"/>
        <dbReference type="Rhea" id="RHEA-COMP:10376"/>
        <dbReference type="Rhea" id="RHEA-COMP:14737"/>
        <dbReference type="Rhea" id="RHEA-COMP:14739"/>
        <dbReference type="ChEBI" id="CHEBI:13193"/>
        <dbReference type="ChEBI" id="CHEBI:15378"/>
        <dbReference type="ChEBI" id="CHEBI:17319"/>
        <dbReference type="ChEBI" id="CHEBI:17499"/>
        <dbReference type="ChEBI" id="CHEBI:29917"/>
        <dbReference type="ChEBI" id="CHEBI:57844"/>
        <dbReference type="ChEBI" id="CHEBI:57856"/>
        <dbReference type="ChEBI" id="CHEBI:59789"/>
        <dbReference type="ChEBI" id="CHEBI:64428"/>
        <dbReference type="ChEBI" id="CHEBI:74415"/>
        <dbReference type="ChEBI" id="CHEBI:74417"/>
        <dbReference type="EC" id="2.8.4.3"/>
    </reaction>
</comment>
<comment type="cofactor">
    <cofactor evidence="1">
        <name>[4Fe-4S] cluster</name>
        <dbReference type="ChEBI" id="CHEBI:49883"/>
    </cofactor>
    <text evidence="1">Binds 2 [4Fe-4S] clusters. One cluster is coordinated with 3 cysteines and an exchangeable S-adenosyl-L-methionine.</text>
</comment>
<comment type="subunit">
    <text evidence="1">Monomer.</text>
</comment>
<comment type="subcellular location">
    <subcellularLocation>
        <location evidence="1">Cytoplasm</location>
    </subcellularLocation>
</comment>
<comment type="similarity">
    <text evidence="1">Belongs to the methylthiotransferase family. MiaB subfamily.</text>
</comment>
<proteinExistence type="inferred from homology"/>